<gene>
    <name evidence="1" type="primary">pepA</name>
    <name type="ordered locus">BMA10229_A2947</name>
</gene>
<name>AMPA_BURM9</name>
<feature type="chain" id="PRO_1000019893" description="Probable cytosol aminopeptidase">
    <location>
        <begin position="1"/>
        <end position="503"/>
    </location>
</feature>
<feature type="active site" evidence="1">
    <location>
        <position position="286"/>
    </location>
</feature>
<feature type="active site" evidence="1">
    <location>
        <position position="360"/>
    </location>
</feature>
<feature type="binding site" evidence="1">
    <location>
        <position position="274"/>
    </location>
    <ligand>
        <name>Mn(2+)</name>
        <dbReference type="ChEBI" id="CHEBI:29035"/>
        <label>2</label>
    </ligand>
</feature>
<feature type="binding site" evidence="1">
    <location>
        <position position="279"/>
    </location>
    <ligand>
        <name>Mn(2+)</name>
        <dbReference type="ChEBI" id="CHEBI:29035"/>
        <label>1</label>
    </ligand>
</feature>
<feature type="binding site" evidence="1">
    <location>
        <position position="279"/>
    </location>
    <ligand>
        <name>Mn(2+)</name>
        <dbReference type="ChEBI" id="CHEBI:29035"/>
        <label>2</label>
    </ligand>
</feature>
<feature type="binding site" evidence="1">
    <location>
        <position position="297"/>
    </location>
    <ligand>
        <name>Mn(2+)</name>
        <dbReference type="ChEBI" id="CHEBI:29035"/>
        <label>2</label>
    </ligand>
</feature>
<feature type="binding site" evidence="1">
    <location>
        <position position="356"/>
    </location>
    <ligand>
        <name>Mn(2+)</name>
        <dbReference type="ChEBI" id="CHEBI:29035"/>
        <label>1</label>
    </ligand>
</feature>
<feature type="binding site" evidence="1">
    <location>
        <position position="358"/>
    </location>
    <ligand>
        <name>Mn(2+)</name>
        <dbReference type="ChEBI" id="CHEBI:29035"/>
        <label>1</label>
    </ligand>
</feature>
<feature type="binding site" evidence="1">
    <location>
        <position position="358"/>
    </location>
    <ligand>
        <name>Mn(2+)</name>
        <dbReference type="ChEBI" id="CHEBI:29035"/>
        <label>2</label>
    </ligand>
</feature>
<reference key="1">
    <citation type="journal article" date="2010" name="Genome Biol. Evol.">
        <title>Continuing evolution of Burkholderia mallei through genome reduction and large-scale rearrangements.</title>
        <authorList>
            <person name="Losada L."/>
            <person name="Ronning C.M."/>
            <person name="DeShazer D."/>
            <person name="Woods D."/>
            <person name="Fedorova N."/>
            <person name="Kim H.S."/>
            <person name="Shabalina S.A."/>
            <person name="Pearson T.R."/>
            <person name="Brinkac L."/>
            <person name="Tan P."/>
            <person name="Nandi T."/>
            <person name="Crabtree J."/>
            <person name="Badger J."/>
            <person name="Beckstrom-Sternberg S."/>
            <person name="Saqib M."/>
            <person name="Schutzer S.E."/>
            <person name="Keim P."/>
            <person name="Nierman W.C."/>
        </authorList>
    </citation>
    <scope>NUCLEOTIDE SEQUENCE [LARGE SCALE GENOMIC DNA]</scope>
    <source>
        <strain>NCTC 10229</strain>
    </source>
</reference>
<accession>A2SAC2</accession>
<proteinExistence type="inferred from homology"/>
<evidence type="ECO:0000255" key="1">
    <source>
        <dbReference type="HAMAP-Rule" id="MF_00181"/>
    </source>
</evidence>
<sequence>MDFSIKGCDWSKGTANGFLTGKSDCIVLGVFEAQTLSGAALDIDEATKGLVSRVIKAGDIDGKLGKTLFLHEVSGIGASRVLLVGLGRQDAFSQKAYGDAAKVAWRALLGTKVVQVTFTLAQLPVPERASDWGVRAAILALRNETYKFTQMKSKPDAGAPALKRVVFSVDPADDKAAKVAAKQAVALANGMDLTRDLGNLPGNVCTPTYLANTAKKIAKDWGLKVDVLGLKQIQALKMGSFLSVAKGSVEPPQFIVLQYRGAAAKAAPVVLVGKGITFDSGGISLKPGEGMDEMKYDMCGAGSVLGTMRAVAEMGLKVNVVAIVPTCENMPAGNANKPGDIVTSMKGLTIEVLNTDAEGRLILCDALTYAERFKPAAVIDVATLTGACIIALGHHNTGLFSKDDALAGELLDASREAGDPAWRLPLDDEYQDQLKSNFADLANIGGRPAGSVTAACFLSRFAENYPWAHLDIAGTAWKSGAAKGATGRPVPLLAQFLIDRAGA</sequence>
<keyword id="KW-0031">Aminopeptidase</keyword>
<keyword id="KW-0963">Cytoplasm</keyword>
<keyword id="KW-0378">Hydrolase</keyword>
<keyword id="KW-0464">Manganese</keyword>
<keyword id="KW-0479">Metal-binding</keyword>
<keyword id="KW-0645">Protease</keyword>
<organism>
    <name type="scientific">Burkholderia mallei (strain NCTC 10229)</name>
    <dbReference type="NCBI Taxonomy" id="412022"/>
    <lineage>
        <taxon>Bacteria</taxon>
        <taxon>Pseudomonadati</taxon>
        <taxon>Pseudomonadota</taxon>
        <taxon>Betaproteobacteria</taxon>
        <taxon>Burkholderiales</taxon>
        <taxon>Burkholderiaceae</taxon>
        <taxon>Burkholderia</taxon>
        <taxon>pseudomallei group</taxon>
    </lineage>
</organism>
<protein>
    <recommendedName>
        <fullName evidence="1">Probable cytosol aminopeptidase</fullName>
        <ecNumber evidence="1">3.4.11.1</ecNumber>
    </recommendedName>
    <alternativeName>
        <fullName evidence="1">Leucine aminopeptidase</fullName>
        <shortName evidence="1">LAP</shortName>
        <ecNumber evidence="1">3.4.11.10</ecNumber>
    </alternativeName>
    <alternativeName>
        <fullName evidence="1">Leucyl aminopeptidase</fullName>
    </alternativeName>
</protein>
<dbReference type="EC" id="3.4.11.1" evidence="1"/>
<dbReference type="EC" id="3.4.11.10" evidence="1"/>
<dbReference type="EMBL" id="CP000546">
    <property type="protein sequence ID" value="ABN01268.1"/>
    <property type="molecule type" value="Genomic_DNA"/>
</dbReference>
<dbReference type="RefSeq" id="WP_004191270.1">
    <property type="nucleotide sequence ID" value="NC_008836.1"/>
</dbReference>
<dbReference type="SMR" id="A2SAC2"/>
<dbReference type="MEROPS" id="M17.003"/>
<dbReference type="KEGG" id="bml:BMA10229_A2947"/>
<dbReference type="HOGENOM" id="CLU_013734_2_2_4"/>
<dbReference type="Proteomes" id="UP000002283">
    <property type="component" value="Chromosome I"/>
</dbReference>
<dbReference type="GO" id="GO:0005737">
    <property type="term" value="C:cytoplasm"/>
    <property type="evidence" value="ECO:0007669"/>
    <property type="project" value="UniProtKB-SubCell"/>
</dbReference>
<dbReference type="GO" id="GO:0030145">
    <property type="term" value="F:manganese ion binding"/>
    <property type="evidence" value="ECO:0007669"/>
    <property type="project" value="UniProtKB-UniRule"/>
</dbReference>
<dbReference type="GO" id="GO:0070006">
    <property type="term" value="F:metalloaminopeptidase activity"/>
    <property type="evidence" value="ECO:0007669"/>
    <property type="project" value="InterPro"/>
</dbReference>
<dbReference type="GO" id="GO:0006508">
    <property type="term" value="P:proteolysis"/>
    <property type="evidence" value="ECO:0007669"/>
    <property type="project" value="UniProtKB-KW"/>
</dbReference>
<dbReference type="CDD" id="cd00433">
    <property type="entry name" value="Peptidase_M17"/>
    <property type="match status" value="1"/>
</dbReference>
<dbReference type="FunFam" id="3.40.630.10:FF:000004">
    <property type="entry name" value="Probable cytosol aminopeptidase"/>
    <property type="match status" value="1"/>
</dbReference>
<dbReference type="Gene3D" id="3.40.220.10">
    <property type="entry name" value="Leucine Aminopeptidase, subunit E, domain 1"/>
    <property type="match status" value="1"/>
</dbReference>
<dbReference type="Gene3D" id="3.40.630.10">
    <property type="entry name" value="Zn peptidases"/>
    <property type="match status" value="1"/>
</dbReference>
<dbReference type="HAMAP" id="MF_00181">
    <property type="entry name" value="Cytosol_peptidase_M17"/>
    <property type="match status" value="1"/>
</dbReference>
<dbReference type="InterPro" id="IPR011356">
    <property type="entry name" value="Leucine_aapep/pepB"/>
</dbReference>
<dbReference type="InterPro" id="IPR043472">
    <property type="entry name" value="Macro_dom-like"/>
</dbReference>
<dbReference type="InterPro" id="IPR000819">
    <property type="entry name" value="Peptidase_M17_C"/>
</dbReference>
<dbReference type="InterPro" id="IPR023042">
    <property type="entry name" value="Peptidase_M17_leu_NH2_pept"/>
</dbReference>
<dbReference type="InterPro" id="IPR008283">
    <property type="entry name" value="Peptidase_M17_N"/>
</dbReference>
<dbReference type="NCBIfam" id="NF002073">
    <property type="entry name" value="PRK00913.1-2"/>
    <property type="match status" value="1"/>
</dbReference>
<dbReference type="NCBIfam" id="NF002074">
    <property type="entry name" value="PRK00913.1-4"/>
    <property type="match status" value="1"/>
</dbReference>
<dbReference type="NCBIfam" id="NF002077">
    <property type="entry name" value="PRK00913.2-4"/>
    <property type="match status" value="1"/>
</dbReference>
<dbReference type="NCBIfam" id="NF002083">
    <property type="entry name" value="PRK00913.3-5"/>
    <property type="match status" value="1"/>
</dbReference>
<dbReference type="PANTHER" id="PTHR11963:SF23">
    <property type="entry name" value="CYTOSOL AMINOPEPTIDASE"/>
    <property type="match status" value="1"/>
</dbReference>
<dbReference type="PANTHER" id="PTHR11963">
    <property type="entry name" value="LEUCINE AMINOPEPTIDASE-RELATED"/>
    <property type="match status" value="1"/>
</dbReference>
<dbReference type="Pfam" id="PF00883">
    <property type="entry name" value="Peptidase_M17"/>
    <property type="match status" value="1"/>
</dbReference>
<dbReference type="Pfam" id="PF02789">
    <property type="entry name" value="Peptidase_M17_N"/>
    <property type="match status" value="1"/>
</dbReference>
<dbReference type="PRINTS" id="PR00481">
    <property type="entry name" value="LAMNOPPTDASE"/>
</dbReference>
<dbReference type="SUPFAM" id="SSF52949">
    <property type="entry name" value="Macro domain-like"/>
    <property type="match status" value="1"/>
</dbReference>
<dbReference type="SUPFAM" id="SSF53187">
    <property type="entry name" value="Zn-dependent exopeptidases"/>
    <property type="match status" value="1"/>
</dbReference>
<dbReference type="PROSITE" id="PS00631">
    <property type="entry name" value="CYTOSOL_AP"/>
    <property type="match status" value="1"/>
</dbReference>
<comment type="function">
    <text evidence="1">Presumably involved in the processing and regular turnover of intracellular proteins. Catalyzes the removal of unsubstituted N-terminal amino acids from various peptides.</text>
</comment>
<comment type="catalytic activity">
    <reaction evidence="1">
        <text>Release of an N-terminal amino acid, Xaa-|-Yaa-, in which Xaa is preferably Leu, but may be other amino acids including Pro although not Arg or Lys, and Yaa may be Pro. Amino acid amides and methyl esters are also readily hydrolyzed, but rates on arylamides are exceedingly low.</text>
        <dbReference type="EC" id="3.4.11.1"/>
    </reaction>
</comment>
<comment type="catalytic activity">
    <reaction evidence="1">
        <text>Release of an N-terminal amino acid, preferentially leucine, but not glutamic or aspartic acids.</text>
        <dbReference type="EC" id="3.4.11.10"/>
    </reaction>
</comment>
<comment type="cofactor">
    <cofactor evidence="1">
        <name>Mn(2+)</name>
        <dbReference type="ChEBI" id="CHEBI:29035"/>
    </cofactor>
    <text evidence="1">Binds 2 manganese ions per subunit.</text>
</comment>
<comment type="subcellular location">
    <subcellularLocation>
        <location evidence="1">Cytoplasm</location>
    </subcellularLocation>
</comment>
<comment type="similarity">
    <text evidence="1">Belongs to the peptidase M17 family.</text>
</comment>